<gene>
    <name evidence="1" type="primary">rodZ</name>
    <name type="ordered locus">E2348C_2799</name>
</gene>
<reference key="1">
    <citation type="journal article" date="2009" name="J. Bacteriol.">
        <title>Complete genome sequence and comparative genome analysis of enteropathogenic Escherichia coli O127:H6 strain E2348/69.</title>
        <authorList>
            <person name="Iguchi A."/>
            <person name="Thomson N.R."/>
            <person name="Ogura Y."/>
            <person name="Saunders D."/>
            <person name="Ooka T."/>
            <person name="Henderson I.R."/>
            <person name="Harris D."/>
            <person name="Asadulghani M."/>
            <person name="Kurokawa K."/>
            <person name="Dean P."/>
            <person name="Kenny B."/>
            <person name="Quail M.A."/>
            <person name="Thurston S."/>
            <person name="Dougan G."/>
            <person name="Hayashi T."/>
            <person name="Parkhill J."/>
            <person name="Frankel G."/>
        </authorList>
    </citation>
    <scope>NUCLEOTIDE SEQUENCE [LARGE SCALE GENOMIC DNA]</scope>
    <source>
        <strain>E2348/69 / EPEC</strain>
    </source>
</reference>
<feature type="chain" id="PRO_1000189536" description="Cytoskeleton protein RodZ">
    <location>
        <begin position="1"/>
        <end position="335"/>
    </location>
</feature>
<feature type="topological domain" description="Cytoplasmic" evidence="1">
    <location>
        <begin position="1"/>
        <end position="111"/>
    </location>
</feature>
<feature type="transmembrane region" description="Helical; Signal-anchor for type II membrane protein" evidence="1">
    <location>
        <begin position="112"/>
        <end position="132"/>
    </location>
</feature>
<feature type="topological domain" description="Periplasmic" evidence="1">
    <location>
        <begin position="133"/>
        <end position="335"/>
    </location>
</feature>
<feature type="domain" description="HTH cro/C1-type" evidence="1">
    <location>
        <begin position="19"/>
        <end position="71"/>
    </location>
</feature>
<feature type="DNA-binding region" description="H-T-H motif" evidence="1">
    <location>
        <begin position="30"/>
        <end position="49"/>
    </location>
</feature>
<feature type="region of interest" description="Disordered" evidence="2">
    <location>
        <begin position="148"/>
        <end position="244"/>
    </location>
</feature>
<feature type="compositionally biased region" description="Polar residues" evidence="2">
    <location>
        <begin position="148"/>
        <end position="164"/>
    </location>
</feature>
<feature type="compositionally biased region" description="Low complexity" evidence="2">
    <location>
        <begin position="165"/>
        <end position="205"/>
    </location>
</feature>
<feature type="compositionally biased region" description="Low complexity" evidence="2">
    <location>
        <begin position="217"/>
        <end position="239"/>
    </location>
</feature>
<keyword id="KW-0997">Cell inner membrane</keyword>
<keyword id="KW-1003">Cell membrane</keyword>
<keyword id="KW-0133">Cell shape</keyword>
<keyword id="KW-0238">DNA-binding</keyword>
<keyword id="KW-0472">Membrane</keyword>
<keyword id="KW-1185">Reference proteome</keyword>
<keyword id="KW-0735">Signal-anchor</keyword>
<keyword id="KW-0812">Transmembrane</keyword>
<keyword id="KW-1133">Transmembrane helix</keyword>
<name>RODZ_ECO27</name>
<protein>
    <recommendedName>
        <fullName evidence="1">Cytoskeleton protein RodZ</fullName>
    </recommendedName>
</protein>
<organism>
    <name type="scientific">Escherichia coli O127:H6 (strain E2348/69 / EPEC)</name>
    <dbReference type="NCBI Taxonomy" id="574521"/>
    <lineage>
        <taxon>Bacteria</taxon>
        <taxon>Pseudomonadati</taxon>
        <taxon>Pseudomonadota</taxon>
        <taxon>Gammaproteobacteria</taxon>
        <taxon>Enterobacterales</taxon>
        <taxon>Enterobacteriaceae</taxon>
        <taxon>Escherichia</taxon>
    </lineage>
</organism>
<comment type="function">
    <text evidence="1">Cytoskeletal protein that is involved in cell-shape control through regulation of the length of the long axis.</text>
</comment>
<comment type="subcellular location">
    <subcellularLocation>
        <location evidence="1">Cell inner membrane</location>
        <topology evidence="1">Single-pass type II membrane protein</topology>
    </subcellularLocation>
    <text evidence="1">Forms helical filaments along the long axis of the cell.</text>
</comment>
<comment type="domain">
    <text evidence="1">The helix-turn-helix (HTH) motif in the cytoplasmic domain of the N-terminus is involved in the formation of spirals to maintain the rigid rod shape. As this protein is anchored in the cytoplasmic membrane, the HTH motif may contribute to protein-protein interactions to form the RodZ helix, which is localized beneath the cytoplasmic membrane. The C-terminal domain may be critical for determination of the rod shape by probably interacting with enzymes required for synthesis of the peptidoglycan layer, including PBPs in the periplasm.</text>
</comment>
<comment type="similarity">
    <text evidence="1">Belongs to the RodZ family.</text>
</comment>
<evidence type="ECO:0000255" key="1">
    <source>
        <dbReference type="HAMAP-Rule" id="MF_02017"/>
    </source>
</evidence>
<evidence type="ECO:0000256" key="2">
    <source>
        <dbReference type="SAM" id="MobiDB-lite"/>
    </source>
</evidence>
<proteinExistence type="inferred from homology"/>
<dbReference type="EMBL" id="FM180568">
    <property type="protein sequence ID" value="CAS10347.1"/>
    <property type="molecule type" value="Genomic_DNA"/>
</dbReference>
<dbReference type="RefSeq" id="WP_001090835.1">
    <property type="nucleotide sequence ID" value="NC_011601.1"/>
</dbReference>
<dbReference type="SMR" id="B7UGW2"/>
<dbReference type="KEGG" id="ecg:E2348C_2799"/>
<dbReference type="HOGENOM" id="CLU_047530_3_1_6"/>
<dbReference type="Proteomes" id="UP000008205">
    <property type="component" value="Chromosome"/>
</dbReference>
<dbReference type="GO" id="GO:0005886">
    <property type="term" value="C:plasma membrane"/>
    <property type="evidence" value="ECO:0007669"/>
    <property type="project" value="UniProtKB-SubCell"/>
</dbReference>
<dbReference type="GO" id="GO:0003677">
    <property type="term" value="F:DNA binding"/>
    <property type="evidence" value="ECO:0007669"/>
    <property type="project" value="UniProtKB-KW"/>
</dbReference>
<dbReference type="GO" id="GO:0008360">
    <property type="term" value="P:regulation of cell shape"/>
    <property type="evidence" value="ECO:0007669"/>
    <property type="project" value="UniProtKB-UniRule"/>
</dbReference>
<dbReference type="CDD" id="cd00093">
    <property type="entry name" value="HTH_XRE"/>
    <property type="match status" value="1"/>
</dbReference>
<dbReference type="FunFam" id="1.10.260.40:FF:000014">
    <property type="entry name" value="Cytoskeleton protein RodZ"/>
    <property type="match status" value="1"/>
</dbReference>
<dbReference type="Gene3D" id="1.10.260.40">
    <property type="entry name" value="lambda repressor-like DNA-binding domains"/>
    <property type="match status" value="1"/>
</dbReference>
<dbReference type="HAMAP" id="MF_02017">
    <property type="entry name" value="RodZ"/>
    <property type="match status" value="1"/>
</dbReference>
<dbReference type="InterPro" id="IPR050400">
    <property type="entry name" value="Bact_Cytoskel_RodZ"/>
</dbReference>
<dbReference type="InterPro" id="IPR001387">
    <property type="entry name" value="Cro/C1-type_HTH"/>
</dbReference>
<dbReference type="InterPro" id="IPR010982">
    <property type="entry name" value="Lambda_DNA-bd_dom_sf"/>
</dbReference>
<dbReference type="InterPro" id="IPR023690">
    <property type="entry name" value="RodZ"/>
</dbReference>
<dbReference type="InterPro" id="IPR025194">
    <property type="entry name" value="RodZ-like_C"/>
</dbReference>
<dbReference type="NCBIfam" id="NF008109">
    <property type="entry name" value="PRK10856.1"/>
    <property type="match status" value="1"/>
</dbReference>
<dbReference type="PANTHER" id="PTHR34475">
    <property type="match status" value="1"/>
</dbReference>
<dbReference type="PANTHER" id="PTHR34475:SF1">
    <property type="entry name" value="CYTOSKELETON PROTEIN RODZ"/>
    <property type="match status" value="1"/>
</dbReference>
<dbReference type="Pfam" id="PF13413">
    <property type="entry name" value="HTH_25"/>
    <property type="match status" value="1"/>
</dbReference>
<dbReference type="Pfam" id="PF13464">
    <property type="entry name" value="RodZ_C"/>
    <property type="match status" value="1"/>
</dbReference>
<dbReference type="SMART" id="SM00530">
    <property type="entry name" value="HTH_XRE"/>
    <property type="match status" value="1"/>
</dbReference>
<dbReference type="SUPFAM" id="SSF47413">
    <property type="entry name" value="lambda repressor-like DNA-binding domains"/>
    <property type="match status" value="1"/>
</dbReference>
<dbReference type="PROSITE" id="PS50943">
    <property type="entry name" value="HTH_CROC1"/>
    <property type="match status" value="1"/>
</dbReference>
<accession>B7UGW2</accession>
<sequence length="335" mass="36127">MNTEATHDQNEALTTGARLRNAREQLGLSQQAVAERLCLKVSTVRDIEEDKAPADLASTFLRGYIRSYARLVHIPEEELLPGLEKQAPLRAAKVAPMQSFSLGKRRKKRDGWLMTFTWLVLFVVIGLSGAWWWQDHKAQQEEITTMADQSSAELNNNQSQSVPLDTSTTTDQAMATTPTSPVDTTATNTQTPAVTAPAPAVDPQQNAVVPPSQANVDTAATPAPAATTTPDGAAPLPTDQAGVTTPAVDPNALVMNFTADCWLEVTDATGKKLFSGMQRKDGNLNLTGQAPYKLKIGAPAAVQIQYQGKPVDLSRFIRTNQVARLTLNAEQSPAQ</sequence>